<reference key="1">
    <citation type="journal article" date="2003" name="Genome Res.">
        <title>Comparative complete genome sequence analysis of the amino acid replacements responsible for the thermostability of Corynebacterium efficiens.</title>
        <authorList>
            <person name="Nishio Y."/>
            <person name="Nakamura Y."/>
            <person name="Kawarabayasi Y."/>
            <person name="Usuda Y."/>
            <person name="Kimura E."/>
            <person name="Sugimoto S."/>
            <person name="Matsui K."/>
            <person name="Yamagishi A."/>
            <person name="Kikuchi H."/>
            <person name="Ikeo K."/>
            <person name="Gojobori T."/>
        </authorList>
    </citation>
    <scope>NUCLEOTIDE SEQUENCE [LARGE SCALE GENOMIC DNA]</scope>
    <source>
        <strain>DSM 44549 / YS-314 / AJ 12310 / JCM 11189 / NBRC 100395</strain>
    </source>
</reference>
<keyword id="KW-0012">Acyltransferase</keyword>
<keyword id="KW-0963">Cytoplasm</keyword>
<keyword id="KW-0408">Iron</keyword>
<keyword id="KW-0479">Metal-binding</keyword>
<keyword id="KW-1185">Reference proteome</keyword>
<keyword id="KW-0808">Transferase</keyword>
<keyword id="KW-0819">tRNA processing</keyword>
<dbReference type="EC" id="2.3.1.234" evidence="1"/>
<dbReference type="EMBL" id="BA000035">
    <property type="protein sequence ID" value="BAC17409.1"/>
    <property type="molecule type" value="Genomic_DNA"/>
</dbReference>
<dbReference type="RefSeq" id="WP_006769724.1">
    <property type="nucleotide sequence ID" value="NC_004369.1"/>
</dbReference>
<dbReference type="SMR" id="Q8FS07"/>
<dbReference type="STRING" id="196164.gene:10741001"/>
<dbReference type="KEGG" id="cef:CE0599"/>
<dbReference type="eggNOG" id="COG0533">
    <property type="taxonomic scope" value="Bacteria"/>
</dbReference>
<dbReference type="HOGENOM" id="CLU_023208_0_2_11"/>
<dbReference type="OrthoDB" id="9806197at2"/>
<dbReference type="Proteomes" id="UP000001409">
    <property type="component" value="Chromosome"/>
</dbReference>
<dbReference type="GO" id="GO:0005737">
    <property type="term" value="C:cytoplasm"/>
    <property type="evidence" value="ECO:0007669"/>
    <property type="project" value="UniProtKB-SubCell"/>
</dbReference>
<dbReference type="GO" id="GO:0005506">
    <property type="term" value="F:iron ion binding"/>
    <property type="evidence" value="ECO:0007669"/>
    <property type="project" value="UniProtKB-UniRule"/>
</dbReference>
<dbReference type="GO" id="GO:0061711">
    <property type="term" value="F:N(6)-L-threonylcarbamoyladenine synthase activity"/>
    <property type="evidence" value="ECO:0007669"/>
    <property type="project" value="UniProtKB-EC"/>
</dbReference>
<dbReference type="GO" id="GO:0002949">
    <property type="term" value="P:tRNA threonylcarbamoyladenosine modification"/>
    <property type="evidence" value="ECO:0007669"/>
    <property type="project" value="UniProtKB-UniRule"/>
</dbReference>
<dbReference type="CDD" id="cd24133">
    <property type="entry name" value="ASKHA_NBD_TsaD_bac"/>
    <property type="match status" value="1"/>
</dbReference>
<dbReference type="FunFam" id="3.30.420.40:FF:000040">
    <property type="entry name" value="tRNA N6-adenosine threonylcarbamoyltransferase"/>
    <property type="match status" value="1"/>
</dbReference>
<dbReference type="Gene3D" id="3.30.420.40">
    <property type="match status" value="2"/>
</dbReference>
<dbReference type="HAMAP" id="MF_01445">
    <property type="entry name" value="TsaD"/>
    <property type="match status" value="1"/>
</dbReference>
<dbReference type="InterPro" id="IPR043129">
    <property type="entry name" value="ATPase_NBD"/>
</dbReference>
<dbReference type="InterPro" id="IPR000905">
    <property type="entry name" value="Gcp-like_dom"/>
</dbReference>
<dbReference type="InterPro" id="IPR017861">
    <property type="entry name" value="KAE1/TsaD"/>
</dbReference>
<dbReference type="InterPro" id="IPR017860">
    <property type="entry name" value="Peptidase_M22_CS"/>
</dbReference>
<dbReference type="InterPro" id="IPR022450">
    <property type="entry name" value="TsaD"/>
</dbReference>
<dbReference type="NCBIfam" id="TIGR00329">
    <property type="entry name" value="gcp_kae1"/>
    <property type="match status" value="1"/>
</dbReference>
<dbReference type="NCBIfam" id="TIGR03723">
    <property type="entry name" value="T6A_TsaD_YgjD"/>
    <property type="match status" value="1"/>
</dbReference>
<dbReference type="PANTHER" id="PTHR11735">
    <property type="entry name" value="TRNA N6-ADENOSINE THREONYLCARBAMOYLTRANSFERASE"/>
    <property type="match status" value="1"/>
</dbReference>
<dbReference type="PANTHER" id="PTHR11735:SF6">
    <property type="entry name" value="TRNA N6-ADENOSINE THREONYLCARBAMOYLTRANSFERASE, MITOCHONDRIAL"/>
    <property type="match status" value="1"/>
</dbReference>
<dbReference type="Pfam" id="PF00814">
    <property type="entry name" value="TsaD"/>
    <property type="match status" value="1"/>
</dbReference>
<dbReference type="PRINTS" id="PR00789">
    <property type="entry name" value="OSIALOPTASE"/>
</dbReference>
<dbReference type="SUPFAM" id="SSF53067">
    <property type="entry name" value="Actin-like ATPase domain"/>
    <property type="match status" value="1"/>
</dbReference>
<dbReference type="PROSITE" id="PS01016">
    <property type="entry name" value="GLYCOPROTEASE"/>
    <property type="match status" value="1"/>
</dbReference>
<proteinExistence type="inferred from homology"/>
<gene>
    <name evidence="1" type="primary">tsaD</name>
    <name type="synonym">gcp</name>
    <name type="ordered locus">CE0599</name>
</gene>
<name>TSAD_COREF</name>
<feature type="chain" id="PRO_0000303337" description="tRNA N6-adenosine threonylcarbamoyltransferase">
    <location>
        <begin position="1"/>
        <end position="344"/>
    </location>
</feature>
<feature type="binding site" evidence="1">
    <location>
        <position position="113"/>
    </location>
    <ligand>
        <name>Fe cation</name>
        <dbReference type="ChEBI" id="CHEBI:24875"/>
    </ligand>
</feature>
<feature type="binding site" evidence="1">
    <location>
        <position position="117"/>
    </location>
    <ligand>
        <name>Fe cation</name>
        <dbReference type="ChEBI" id="CHEBI:24875"/>
    </ligand>
</feature>
<feature type="binding site" evidence="1">
    <location>
        <begin position="135"/>
        <end position="139"/>
    </location>
    <ligand>
        <name>substrate</name>
    </ligand>
</feature>
<feature type="binding site" evidence="1">
    <location>
        <position position="169"/>
    </location>
    <ligand>
        <name>substrate</name>
    </ligand>
</feature>
<feature type="binding site" evidence="1">
    <location>
        <position position="182"/>
    </location>
    <ligand>
        <name>substrate</name>
    </ligand>
</feature>
<feature type="binding site" evidence="1">
    <location>
        <position position="186"/>
    </location>
    <ligand>
        <name>substrate</name>
    </ligand>
</feature>
<feature type="binding site" evidence="1">
    <location>
        <position position="278"/>
    </location>
    <ligand>
        <name>substrate</name>
    </ligand>
</feature>
<feature type="binding site" evidence="1">
    <location>
        <position position="306"/>
    </location>
    <ligand>
        <name>Fe cation</name>
        <dbReference type="ChEBI" id="CHEBI:24875"/>
    </ligand>
</feature>
<organism>
    <name type="scientific">Corynebacterium efficiens (strain DSM 44549 / YS-314 / AJ 12310 / JCM 11189 / NBRC 100395)</name>
    <dbReference type="NCBI Taxonomy" id="196164"/>
    <lineage>
        <taxon>Bacteria</taxon>
        <taxon>Bacillati</taxon>
        <taxon>Actinomycetota</taxon>
        <taxon>Actinomycetes</taxon>
        <taxon>Mycobacteriales</taxon>
        <taxon>Corynebacteriaceae</taxon>
        <taxon>Corynebacterium</taxon>
    </lineage>
</organism>
<accession>Q8FS07</accession>
<protein>
    <recommendedName>
        <fullName evidence="1">tRNA N6-adenosine threonylcarbamoyltransferase</fullName>
        <ecNumber evidence="1">2.3.1.234</ecNumber>
    </recommendedName>
    <alternativeName>
        <fullName evidence="1">N6-L-threonylcarbamoyladenine synthase</fullName>
        <shortName evidence="1">t(6)A synthase</shortName>
    </alternativeName>
    <alternativeName>
        <fullName evidence="1">t(6)A37 threonylcarbamoyladenosine biosynthesis protein TsaD</fullName>
    </alternativeName>
    <alternativeName>
        <fullName evidence="1">tRNA threonylcarbamoyladenosine biosynthesis protein TsaD</fullName>
    </alternativeName>
</protein>
<evidence type="ECO:0000255" key="1">
    <source>
        <dbReference type="HAMAP-Rule" id="MF_01445"/>
    </source>
</evidence>
<sequence>MIVLGIESSCDETGVGVVDLDEQGNLTILADAVASSMQDHARFGGVVPEIASRAHLESMVPVMREALHRAGIDKPDAVAATVGPGLAGALLVGASAAKAYAAAWDVPFYAVNHLGGHVAVANLDGEPLPHSVALLVSGGHTQLLEVEAVGLPMKELGSTLDDAAGEAYDKVSRLLGLGYPGGPVIDKLARRGDPQAIAFPRGLMKKSDSRHDFSFSGLKTAVARYVEAAERAGEVISVEDVCASFQEAVCDVLTFKAVRACQDVGAKVLLLGGGVAANSRLRELAQERCDAAGIELRVPSFKLCTDNGVMIAALAAQRIHEGAGGSALTVGTDPSLAVETPQVF</sequence>
<comment type="function">
    <text evidence="1">Required for the formation of a threonylcarbamoyl group on adenosine at position 37 (t(6)A37) in tRNAs that read codons beginning with adenine. Is involved in the transfer of the threonylcarbamoyl moiety of threonylcarbamoyl-AMP (TC-AMP) to the N6 group of A37, together with TsaE and TsaB. TsaD likely plays a direct catalytic role in this reaction.</text>
</comment>
<comment type="catalytic activity">
    <reaction evidence="1">
        <text>L-threonylcarbamoyladenylate + adenosine(37) in tRNA = N(6)-L-threonylcarbamoyladenosine(37) in tRNA + AMP + H(+)</text>
        <dbReference type="Rhea" id="RHEA:37059"/>
        <dbReference type="Rhea" id="RHEA-COMP:10162"/>
        <dbReference type="Rhea" id="RHEA-COMP:10163"/>
        <dbReference type="ChEBI" id="CHEBI:15378"/>
        <dbReference type="ChEBI" id="CHEBI:73682"/>
        <dbReference type="ChEBI" id="CHEBI:74411"/>
        <dbReference type="ChEBI" id="CHEBI:74418"/>
        <dbReference type="ChEBI" id="CHEBI:456215"/>
        <dbReference type="EC" id="2.3.1.234"/>
    </reaction>
</comment>
<comment type="cofactor">
    <cofactor evidence="1">
        <name>Fe(2+)</name>
        <dbReference type="ChEBI" id="CHEBI:29033"/>
    </cofactor>
    <text evidence="1">Binds 1 Fe(2+) ion per subunit.</text>
</comment>
<comment type="subcellular location">
    <subcellularLocation>
        <location evidence="1">Cytoplasm</location>
    </subcellularLocation>
</comment>
<comment type="similarity">
    <text evidence="1">Belongs to the KAE1 / TsaD family.</text>
</comment>